<keyword id="KW-0687">Ribonucleoprotein</keyword>
<keyword id="KW-0689">Ribosomal protein</keyword>
<sequence length="72" mass="8295">MGAKKNLLAELREKSSEELDEFIRDNKKALFALRAEAALQNKVVKTHQFSLYKKSIARALIIKQEKKDRVHG</sequence>
<feature type="chain" id="PRO_1000121745" description="Large ribosomal subunit protein uL29">
    <location>
        <begin position="1"/>
        <end position="72"/>
    </location>
</feature>
<feature type="sequence conflict" description="In Ref. 1; AAA23170." evidence="2" ref="1">
    <original>D</original>
    <variation>G</variation>
    <location>
        <position position="68"/>
    </location>
</feature>
<reference key="1">
    <citation type="journal article" date="1992" name="J. Bacteriol.">
        <title>Cloning and sequence analysis of the Chlamydia trachomatis spc ribosomal protein gene cluster.</title>
        <authorList>
            <person name="Kaul R."/>
            <person name="Gray G.J."/>
            <person name="Koehncke N.R."/>
            <person name="Gu L.J."/>
        </authorList>
    </citation>
    <scope>NUCLEOTIDE SEQUENCE [GENOMIC DNA]</scope>
</reference>
<reference key="2">
    <citation type="journal article" date="2008" name="Genome Res.">
        <title>Chlamydia trachomatis: genome sequence analysis of lymphogranuloma venereum isolates.</title>
        <authorList>
            <person name="Thomson N.R."/>
            <person name="Holden M.T.G."/>
            <person name="Carder C."/>
            <person name="Lennard N."/>
            <person name="Lockey S.J."/>
            <person name="Marsh P."/>
            <person name="Skipp P."/>
            <person name="O'Connor C.D."/>
            <person name="Goodhead I."/>
            <person name="Norbertzcak H."/>
            <person name="Harris B."/>
            <person name="Ormond D."/>
            <person name="Rance R."/>
            <person name="Quail M.A."/>
            <person name="Parkhill J."/>
            <person name="Stephens R.S."/>
            <person name="Clarke I.N."/>
        </authorList>
    </citation>
    <scope>NUCLEOTIDE SEQUENCE [LARGE SCALE GENOMIC DNA]</scope>
    <source>
        <strain>ATCC VR-902B / DSM 19102 / 434/Bu</strain>
    </source>
</reference>
<comment type="similarity">
    <text evidence="1">Belongs to the universal ribosomal protein uL29 family.</text>
</comment>
<name>RL29_CHLT2</name>
<gene>
    <name evidence="1" type="primary">rpmC</name>
    <name type="ordered locus">CTL0782</name>
</gene>
<proteinExistence type="inferred from homology"/>
<protein>
    <recommendedName>
        <fullName evidence="1">Large ribosomal subunit protein uL29</fullName>
    </recommendedName>
    <alternativeName>
        <fullName evidence="2">50S ribosomal protein L29</fullName>
    </alternativeName>
</protein>
<accession>B0B894</accession>
<accession>O84525</accession>
<accession>P28538</accession>
<organism>
    <name type="scientific">Chlamydia trachomatis serovar L2 (strain ATCC VR-902B / DSM 19102 / 434/Bu)</name>
    <dbReference type="NCBI Taxonomy" id="471472"/>
    <lineage>
        <taxon>Bacteria</taxon>
        <taxon>Pseudomonadati</taxon>
        <taxon>Chlamydiota</taxon>
        <taxon>Chlamydiia</taxon>
        <taxon>Chlamydiales</taxon>
        <taxon>Chlamydiaceae</taxon>
        <taxon>Chlamydia/Chlamydophila group</taxon>
        <taxon>Chlamydia</taxon>
    </lineage>
</organism>
<dbReference type="EMBL" id="M80325">
    <property type="protein sequence ID" value="AAA23170.1"/>
    <property type="molecule type" value="Genomic_DNA"/>
</dbReference>
<dbReference type="EMBL" id="AM884176">
    <property type="protein sequence ID" value="CAP04220.1"/>
    <property type="molecule type" value="Genomic_DNA"/>
</dbReference>
<dbReference type="PIR" id="B42645">
    <property type="entry name" value="B42645"/>
</dbReference>
<dbReference type="RefSeq" id="WP_009873872.1">
    <property type="nucleotide sequence ID" value="NC_010287.1"/>
</dbReference>
<dbReference type="RefSeq" id="YP_001654853.1">
    <property type="nucleotide sequence ID" value="NC_010287.1"/>
</dbReference>
<dbReference type="SMR" id="B0B894"/>
<dbReference type="KEGG" id="ctb:CTL0782"/>
<dbReference type="PATRIC" id="fig|471472.4.peg.838"/>
<dbReference type="HOGENOM" id="CLU_2715043_0_0_0"/>
<dbReference type="Proteomes" id="UP001154402">
    <property type="component" value="Chromosome"/>
</dbReference>
<dbReference type="GO" id="GO:0022625">
    <property type="term" value="C:cytosolic large ribosomal subunit"/>
    <property type="evidence" value="ECO:0007669"/>
    <property type="project" value="TreeGrafter"/>
</dbReference>
<dbReference type="GO" id="GO:0003735">
    <property type="term" value="F:structural constituent of ribosome"/>
    <property type="evidence" value="ECO:0007669"/>
    <property type="project" value="InterPro"/>
</dbReference>
<dbReference type="GO" id="GO:0006412">
    <property type="term" value="P:translation"/>
    <property type="evidence" value="ECO:0007669"/>
    <property type="project" value="UniProtKB-UniRule"/>
</dbReference>
<dbReference type="Gene3D" id="1.10.287.310">
    <property type="match status" value="1"/>
</dbReference>
<dbReference type="HAMAP" id="MF_00374">
    <property type="entry name" value="Ribosomal_uL29"/>
    <property type="match status" value="1"/>
</dbReference>
<dbReference type="InterPro" id="IPR050063">
    <property type="entry name" value="Ribosomal_protein_uL29"/>
</dbReference>
<dbReference type="InterPro" id="IPR001854">
    <property type="entry name" value="Ribosomal_uL29"/>
</dbReference>
<dbReference type="InterPro" id="IPR018254">
    <property type="entry name" value="Ribosomal_uL29_CS"/>
</dbReference>
<dbReference type="InterPro" id="IPR036049">
    <property type="entry name" value="Ribosomal_uL29_sf"/>
</dbReference>
<dbReference type="NCBIfam" id="TIGR00012">
    <property type="entry name" value="L29"/>
    <property type="match status" value="1"/>
</dbReference>
<dbReference type="PANTHER" id="PTHR10916">
    <property type="entry name" value="60S RIBOSOMAL PROTEIN L35/50S RIBOSOMAL PROTEIN L29"/>
    <property type="match status" value="1"/>
</dbReference>
<dbReference type="PANTHER" id="PTHR10916:SF0">
    <property type="entry name" value="LARGE RIBOSOMAL SUBUNIT PROTEIN UL29C"/>
    <property type="match status" value="1"/>
</dbReference>
<dbReference type="Pfam" id="PF00831">
    <property type="entry name" value="Ribosomal_L29"/>
    <property type="match status" value="1"/>
</dbReference>
<dbReference type="SUPFAM" id="SSF46561">
    <property type="entry name" value="Ribosomal protein L29 (L29p)"/>
    <property type="match status" value="1"/>
</dbReference>
<dbReference type="PROSITE" id="PS00579">
    <property type="entry name" value="RIBOSOMAL_L29"/>
    <property type="match status" value="1"/>
</dbReference>
<evidence type="ECO:0000255" key="1">
    <source>
        <dbReference type="HAMAP-Rule" id="MF_00374"/>
    </source>
</evidence>
<evidence type="ECO:0000305" key="2"/>